<accession>Q5V5S6</accession>
<name>COXX_HALMA</name>
<proteinExistence type="inferred from homology"/>
<organism>
    <name type="scientific">Haloarcula marismortui (strain ATCC 43049 / DSM 3752 / JCM 8966 / VKM B-1809)</name>
    <name type="common">Halobacterium marismortui</name>
    <dbReference type="NCBI Taxonomy" id="272569"/>
    <lineage>
        <taxon>Archaea</taxon>
        <taxon>Methanobacteriati</taxon>
        <taxon>Methanobacteriota</taxon>
        <taxon>Stenosarchaea group</taxon>
        <taxon>Halobacteria</taxon>
        <taxon>Halobacteriales</taxon>
        <taxon>Haloarculaceae</taxon>
        <taxon>Haloarcula</taxon>
    </lineage>
</organism>
<dbReference type="EC" id="2.5.1.141"/>
<dbReference type="EMBL" id="AY596297">
    <property type="protein sequence ID" value="AAV45126.1"/>
    <property type="molecule type" value="Genomic_DNA"/>
</dbReference>
<dbReference type="RefSeq" id="WP_011222794.1">
    <property type="nucleotide sequence ID" value="NC_006396.1"/>
</dbReference>
<dbReference type="SMR" id="Q5V5S6"/>
<dbReference type="STRING" id="272569.rrnAC0044"/>
<dbReference type="PaxDb" id="272569-rrnAC0044"/>
<dbReference type="EnsemblBacteria" id="AAV45126">
    <property type="protein sequence ID" value="AAV45126"/>
    <property type="gene ID" value="rrnAC0044"/>
</dbReference>
<dbReference type="GeneID" id="40154360"/>
<dbReference type="KEGG" id="hma:rrnAC0044"/>
<dbReference type="PATRIC" id="fig|272569.17.peg.855"/>
<dbReference type="eggNOG" id="arCOG00479">
    <property type="taxonomic scope" value="Archaea"/>
</dbReference>
<dbReference type="HOGENOM" id="CLU_030009_1_1_2"/>
<dbReference type="UniPathway" id="UPA00834">
    <property type="reaction ID" value="UER00712"/>
</dbReference>
<dbReference type="Proteomes" id="UP000001169">
    <property type="component" value="Chromosome I"/>
</dbReference>
<dbReference type="GO" id="GO:0005886">
    <property type="term" value="C:plasma membrane"/>
    <property type="evidence" value="ECO:0007669"/>
    <property type="project" value="UniProtKB-SubCell"/>
</dbReference>
<dbReference type="GO" id="GO:0008495">
    <property type="term" value="F:protoheme IX farnesyltransferase activity"/>
    <property type="evidence" value="ECO:0007669"/>
    <property type="project" value="UniProtKB-UniRule"/>
</dbReference>
<dbReference type="GO" id="GO:0048034">
    <property type="term" value="P:heme O biosynthetic process"/>
    <property type="evidence" value="ECO:0007669"/>
    <property type="project" value="UniProtKB-UniRule"/>
</dbReference>
<dbReference type="CDD" id="cd13957">
    <property type="entry name" value="PT_UbiA_Cox10"/>
    <property type="match status" value="1"/>
</dbReference>
<dbReference type="Gene3D" id="1.10.357.140">
    <property type="entry name" value="UbiA prenyltransferase"/>
    <property type="match status" value="1"/>
</dbReference>
<dbReference type="HAMAP" id="MF_00154">
    <property type="entry name" value="CyoE_CtaB"/>
    <property type="match status" value="1"/>
</dbReference>
<dbReference type="InterPro" id="IPR006369">
    <property type="entry name" value="Protohaem_IX_farnesylTrfase"/>
</dbReference>
<dbReference type="InterPro" id="IPR000537">
    <property type="entry name" value="UbiA_prenyltransferase"/>
</dbReference>
<dbReference type="InterPro" id="IPR044878">
    <property type="entry name" value="UbiA_sf"/>
</dbReference>
<dbReference type="NCBIfam" id="TIGR01473">
    <property type="entry name" value="cyoE_ctaB"/>
    <property type="match status" value="1"/>
</dbReference>
<dbReference type="NCBIfam" id="NF003349">
    <property type="entry name" value="PRK04375.1-2"/>
    <property type="match status" value="1"/>
</dbReference>
<dbReference type="PANTHER" id="PTHR43448">
    <property type="entry name" value="PROTOHEME IX FARNESYLTRANSFERASE, MITOCHONDRIAL"/>
    <property type="match status" value="1"/>
</dbReference>
<dbReference type="PANTHER" id="PTHR43448:SF2">
    <property type="entry name" value="PROTOHEME IX FARNESYLTRANSFERASE, MITOCHONDRIAL"/>
    <property type="match status" value="1"/>
</dbReference>
<dbReference type="Pfam" id="PF01040">
    <property type="entry name" value="UbiA"/>
    <property type="match status" value="1"/>
</dbReference>
<keyword id="KW-1003">Cell membrane</keyword>
<keyword id="KW-0350">Heme biosynthesis</keyword>
<keyword id="KW-0472">Membrane</keyword>
<keyword id="KW-1185">Reference proteome</keyword>
<keyword id="KW-0808">Transferase</keyword>
<keyword id="KW-0812">Transmembrane</keyword>
<keyword id="KW-1133">Transmembrane helix</keyword>
<protein>
    <recommendedName>
        <fullName>Protoheme IX farnesyltransferase</fullName>
        <ecNumber>2.5.1.141</ecNumber>
    </recommendedName>
    <alternativeName>
        <fullName>Heme B farnesyltransferase</fullName>
    </alternativeName>
    <alternativeName>
        <fullName>Heme O synthase</fullName>
    </alternativeName>
</protein>
<reference key="1">
    <citation type="journal article" date="2004" name="Genome Res.">
        <title>Genome sequence of Haloarcula marismortui: a halophilic archaeon from the Dead Sea.</title>
        <authorList>
            <person name="Baliga N.S."/>
            <person name="Bonneau R."/>
            <person name="Facciotti M.T."/>
            <person name="Pan M."/>
            <person name="Glusman G."/>
            <person name="Deutsch E.W."/>
            <person name="Shannon P."/>
            <person name="Chiu Y."/>
            <person name="Weng R.S."/>
            <person name="Gan R.R."/>
            <person name="Hung P."/>
            <person name="Date S.V."/>
            <person name="Marcotte E."/>
            <person name="Hood L."/>
            <person name="Ng W.V."/>
        </authorList>
    </citation>
    <scope>NUCLEOTIDE SEQUENCE [LARGE SCALE GENOMIC DNA]</scope>
    <source>
        <strain>ATCC 43049 / DSM 3752 / JCM 8966 / VKM B-1809</strain>
    </source>
</reference>
<comment type="function">
    <text evidence="1">Converts heme B (protoheme IX) to heme O by substitution of the vinyl group on carbon 2 of heme B porphyrin ring with a hydroxyethyl farnesyl side group.</text>
</comment>
<comment type="catalytic activity">
    <reaction>
        <text>heme b + (2E,6E)-farnesyl diphosphate + H2O = Fe(II)-heme o + diphosphate</text>
        <dbReference type="Rhea" id="RHEA:28070"/>
        <dbReference type="ChEBI" id="CHEBI:15377"/>
        <dbReference type="ChEBI" id="CHEBI:33019"/>
        <dbReference type="ChEBI" id="CHEBI:60344"/>
        <dbReference type="ChEBI" id="CHEBI:60530"/>
        <dbReference type="ChEBI" id="CHEBI:175763"/>
        <dbReference type="EC" id="2.5.1.141"/>
    </reaction>
</comment>
<comment type="pathway">
    <text>Porphyrin-containing compound metabolism; heme O biosynthesis; heme O from protoheme: step 1/1.</text>
</comment>
<comment type="subcellular location">
    <subcellularLocation>
        <location evidence="4">Cell membrane</location>
        <topology evidence="4">Multi-pass membrane protein</topology>
    </subcellularLocation>
</comment>
<comment type="miscellaneous">
    <text evidence="1">Carbon 2 of the heme B porphyrin ring is defined according to the Fischer nomenclature.</text>
</comment>
<comment type="similarity">
    <text evidence="4">In the C-terminal section; belongs to the UbiA prenyltransferase family. Protoheme IX farnesyltransferase subfamily.</text>
</comment>
<feature type="chain" id="PRO_0000327202" description="Protoheme IX farnesyltransferase">
    <location>
        <begin position="1"/>
        <end position="463"/>
    </location>
</feature>
<feature type="transmembrane region" description="Helical" evidence="2">
    <location>
        <begin position="6"/>
        <end position="26"/>
    </location>
</feature>
<feature type="transmembrane region" description="Helical" evidence="2">
    <location>
        <begin position="54"/>
        <end position="74"/>
    </location>
</feature>
<feature type="transmembrane region" description="Helical" evidence="2">
    <location>
        <begin position="89"/>
        <end position="109"/>
    </location>
</feature>
<feature type="transmembrane region" description="Helical" evidence="2">
    <location>
        <begin position="115"/>
        <end position="135"/>
    </location>
</feature>
<feature type="transmembrane region" description="Helical" evidence="2">
    <location>
        <begin position="193"/>
        <end position="213"/>
    </location>
</feature>
<feature type="transmembrane region" description="Helical" evidence="2">
    <location>
        <begin position="218"/>
        <end position="238"/>
    </location>
</feature>
<feature type="transmembrane region" description="Helical" evidence="2">
    <location>
        <begin position="265"/>
        <end position="285"/>
    </location>
</feature>
<feature type="transmembrane region" description="Helical" evidence="2">
    <location>
        <begin position="286"/>
        <end position="306"/>
    </location>
</feature>
<feature type="transmembrane region" description="Helical" evidence="2">
    <location>
        <begin position="314"/>
        <end position="334"/>
    </location>
</feature>
<feature type="transmembrane region" description="Helical" evidence="2">
    <location>
        <begin position="336"/>
        <end position="356"/>
    </location>
</feature>
<feature type="transmembrane region" description="Helical" evidence="2">
    <location>
        <begin position="387"/>
        <end position="407"/>
    </location>
</feature>
<feature type="transmembrane region" description="Helical" evidence="2">
    <location>
        <begin position="409"/>
        <end position="429"/>
    </location>
</feature>
<feature type="transmembrane region" description="Helical" evidence="2">
    <location>
        <begin position="441"/>
        <end position="461"/>
    </location>
</feature>
<feature type="region of interest" description="Unknown">
    <location>
        <begin position="1"/>
        <end position="193"/>
    </location>
</feature>
<feature type="region of interest" description="Disordered" evidence="3">
    <location>
        <begin position="144"/>
        <end position="170"/>
    </location>
</feature>
<feature type="region of interest" description="Protoheme IX prenyltransferase">
    <location>
        <begin position="194"/>
        <end position="460"/>
    </location>
</feature>
<evidence type="ECO:0000250" key="1"/>
<evidence type="ECO:0000255" key="2"/>
<evidence type="ECO:0000256" key="3">
    <source>
        <dbReference type="SAM" id="MobiDB-lite"/>
    </source>
</evidence>
<evidence type="ECO:0000305" key="4"/>
<gene>
    <name type="primary">ctaB</name>
    <name type="ordered locus">rrnAC0044</name>
</gene>
<sequence length="463" mass="48444">MAESRTFTGLLAATAVGVYLLVLAGATTTLTDAAAACTTWPLCDGPVDVTNTALLVAWGHRLVAAAVGLLVVAMAVVGLRSGCRGRVKAAIIIGAVLYPVQIALGAIVATSAETALPGAHLALGMGIFGSFVLALAWHLEAETGSDDETPVKNPTPAPEPAGDDTPDRTPALTFRERLVGTASAYFRLMKPRLMWLLCLVAAAGMALAAGQTLTVRTVLLTLGGGVLSIGASGTFNHVLERDIDKRMDRTSDRPIATHQIPVRNALAFGLLLSFASLWLFWQVNALVAVLGLTAIVFYSVIYTLVLKPNTVQNTVLGGAAGALPALIGWVAADGSVGLPGVVLAVIIFLWTPAHFYNLALAYKDDYEAGGFPMMPVVRGETETRKHIVYYLGATLIASGILGVLTPLGWLYAVTSVLLGAVFLWAVVLLHREQTEAAAFRAFHASNAYLGAVLIAIVVDALAL</sequence>